<comment type="catalytic activity">
    <reaction>
        <text>an acyl phosphate + H2O = a carboxylate + phosphate + H(+)</text>
        <dbReference type="Rhea" id="RHEA:14965"/>
        <dbReference type="ChEBI" id="CHEBI:15377"/>
        <dbReference type="ChEBI" id="CHEBI:15378"/>
        <dbReference type="ChEBI" id="CHEBI:29067"/>
        <dbReference type="ChEBI" id="CHEBI:43474"/>
        <dbReference type="ChEBI" id="CHEBI:59918"/>
        <dbReference type="EC" id="3.6.1.7"/>
    </reaction>
</comment>
<comment type="similarity">
    <text evidence="2">Belongs to the acylphosphatase family.</text>
</comment>
<comment type="sequence caution" evidence="2">
    <conflict type="erroneous initiation">
        <sequence resource="EMBL-CDS" id="ABK12281"/>
    </conflict>
</comment>
<gene>
    <name type="primary">acyP</name>
    <name type="ordered locus">Bcen2424_5548</name>
</gene>
<keyword id="KW-0378">Hydrolase</keyword>
<evidence type="ECO:0000255" key="1">
    <source>
        <dbReference type="PROSITE-ProRule" id="PRU00520"/>
    </source>
</evidence>
<evidence type="ECO:0000305" key="2"/>
<protein>
    <recommendedName>
        <fullName>Acylphosphatase</fullName>
        <ecNumber>3.6.1.7</ecNumber>
    </recommendedName>
    <alternativeName>
        <fullName>Acylphosphate phosphohydrolase</fullName>
    </alternativeName>
</protein>
<sequence length="98" mass="11407">MSRNELDERIETYYVRVRGVVQGVGFRHATVREAHALKLRGWVANLEDGTVEAMIQGPGAQIDRMLAWLRHGPPAARVTEVTFEERRTEKRFERFQQQ</sequence>
<reference key="1">
    <citation type="submission" date="2006-08" db="EMBL/GenBank/DDBJ databases">
        <title>Complete sequence of chromosome 2 of Burkholderia cenocepacia HI2424.</title>
        <authorList>
            <person name="Copeland A."/>
            <person name="Lucas S."/>
            <person name="Lapidus A."/>
            <person name="Barry K."/>
            <person name="Detter J.C."/>
            <person name="Glavina del Rio T."/>
            <person name="Hammon N."/>
            <person name="Israni S."/>
            <person name="Pitluck S."/>
            <person name="Chain P."/>
            <person name="Malfatti S."/>
            <person name="Shin M."/>
            <person name="Vergez L."/>
            <person name="Schmutz J."/>
            <person name="Larimer F."/>
            <person name="Land M."/>
            <person name="Hauser L."/>
            <person name="Kyrpides N."/>
            <person name="Kim E."/>
            <person name="LiPuma J.J."/>
            <person name="Gonzalez C.F."/>
            <person name="Konstantinidis K."/>
            <person name="Tiedje J.M."/>
            <person name="Richardson P."/>
        </authorList>
    </citation>
    <scope>NUCLEOTIDE SEQUENCE [LARGE SCALE GENOMIC DNA]</scope>
    <source>
        <strain>HI2424</strain>
    </source>
</reference>
<proteinExistence type="inferred from homology"/>
<accession>A0B3Q5</accession>
<name>ACYP_BURCH</name>
<organism>
    <name type="scientific">Burkholderia cenocepacia (strain HI2424)</name>
    <dbReference type="NCBI Taxonomy" id="331272"/>
    <lineage>
        <taxon>Bacteria</taxon>
        <taxon>Pseudomonadati</taxon>
        <taxon>Pseudomonadota</taxon>
        <taxon>Betaproteobacteria</taxon>
        <taxon>Burkholderiales</taxon>
        <taxon>Burkholderiaceae</taxon>
        <taxon>Burkholderia</taxon>
        <taxon>Burkholderia cepacia complex</taxon>
    </lineage>
</organism>
<dbReference type="EC" id="3.6.1.7"/>
<dbReference type="EMBL" id="CP000459">
    <property type="protein sequence ID" value="ABK12281.1"/>
    <property type="status" value="ALT_INIT"/>
    <property type="molecule type" value="Genomic_DNA"/>
</dbReference>
<dbReference type="RefSeq" id="WP_006480292.1">
    <property type="nucleotide sequence ID" value="NC_008543.1"/>
</dbReference>
<dbReference type="SMR" id="A0B3Q5"/>
<dbReference type="KEGG" id="bch:Bcen2424_5548"/>
<dbReference type="HOGENOM" id="CLU_141932_1_2_4"/>
<dbReference type="GO" id="GO:0003998">
    <property type="term" value="F:acylphosphatase activity"/>
    <property type="evidence" value="ECO:0007669"/>
    <property type="project" value="UniProtKB-EC"/>
</dbReference>
<dbReference type="Gene3D" id="3.30.70.100">
    <property type="match status" value="1"/>
</dbReference>
<dbReference type="InterPro" id="IPR020456">
    <property type="entry name" value="Acylphosphatase"/>
</dbReference>
<dbReference type="InterPro" id="IPR001792">
    <property type="entry name" value="Acylphosphatase-like_dom"/>
</dbReference>
<dbReference type="InterPro" id="IPR036046">
    <property type="entry name" value="Acylphosphatase-like_dom_sf"/>
</dbReference>
<dbReference type="InterPro" id="IPR017968">
    <property type="entry name" value="Acylphosphatase_CS"/>
</dbReference>
<dbReference type="NCBIfam" id="NF010998">
    <property type="entry name" value="PRK14424.1"/>
    <property type="match status" value="1"/>
</dbReference>
<dbReference type="PANTHER" id="PTHR47268">
    <property type="entry name" value="ACYLPHOSPHATASE"/>
    <property type="match status" value="1"/>
</dbReference>
<dbReference type="PANTHER" id="PTHR47268:SF4">
    <property type="entry name" value="ACYLPHOSPHATASE"/>
    <property type="match status" value="1"/>
</dbReference>
<dbReference type="Pfam" id="PF00708">
    <property type="entry name" value="Acylphosphatase"/>
    <property type="match status" value="1"/>
</dbReference>
<dbReference type="PRINTS" id="PR00112">
    <property type="entry name" value="ACYLPHPHTASE"/>
</dbReference>
<dbReference type="SUPFAM" id="SSF54975">
    <property type="entry name" value="Acylphosphatase/BLUF domain-like"/>
    <property type="match status" value="1"/>
</dbReference>
<dbReference type="PROSITE" id="PS00150">
    <property type="entry name" value="ACYLPHOSPHATASE_1"/>
    <property type="match status" value="1"/>
</dbReference>
<dbReference type="PROSITE" id="PS00151">
    <property type="entry name" value="ACYLPHOSPHATASE_2"/>
    <property type="match status" value="1"/>
</dbReference>
<dbReference type="PROSITE" id="PS51160">
    <property type="entry name" value="ACYLPHOSPHATASE_3"/>
    <property type="match status" value="1"/>
</dbReference>
<feature type="chain" id="PRO_0000326668" description="Acylphosphatase">
    <location>
        <begin position="1"/>
        <end position="98"/>
    </location>
</feature>
<feature type="domain" description="Acylphosphatase-like" evidence="1">
    <location>
        <begin position="12"/>
        <end position="98"/>
    </location>
</feature>
<feature type="active site" evidence="1">
    <location>
        <position position="27"/>
    </location>
</feature>
<feature type="active site" evidence="1">
    <location>
        <position position="45"/>
    </location>
</feature>